<comment type="function">
    <text evidence="1">Antitoxin component of a possible type II toxin-antitoxin (TA) system. The cognate toxin is VapC9 (By similarity).</text>
</comment>
<organism>
    <name type="scientific">Mycobacterium tuberculosis (strain CDC 1551 / Oshkosh)</name>
    <dbReference type="NCBI Taxonomy" id="83331"/>
    <lineage>
        <taxon>Bacteria</taxon>
        <taxon>Bacillati</taxon>
        <taxon>Actinomycetota</taxon>
        <taxon>Actinomycetes</taxon>
        <taxon>Mycobacteriales</taxon>
        <taxon>Mycobacteriaceae</taxon>
        <taxon>Mycobacterium</taxon>
        <taxon>Mycobacterium tuberculosis complex</taxon>
    </lineage>
</organism>
<feature type="chain" id="PRO_0000427889" description="Putative antitoxin VapB9">
    <location>
        <begin position="1"/>
        <end position="73"/>
    </location>
</feature>
<reference key="1">
    <citation type="journal article" date="2002" name="J. Bacteriol.">
        <title>Whole-genome comparison of Mycobacterium tuberculosis clinical and laboratory strains.</title>
        <authorList>
            <person name="Fleischmann R.D."/>
            <person name="Alland D."/>
            <person name="Eisen J.A."/>
            <person name="Carpenter L."/>
            <person name="White O."/>
            <person name="Peterson J.D."/>
            <person name="DeBoy R.T."/>
            <person name="Dodson R.J."/>
            <person name="Gwinn M.L."/>
            <person name="Haft D.H."/>
            <person name="Hickey E.K."/>
            <person name="Kolonay J.F."/>
            <person name="Nelson W.C."/>
            <person name="Umayam L.A."/>
            <person name="Ermolaeva M.D."/>
            <person name="Salzberg S.L."/>
            <person name="Delcher A."/>
            <person name="Utterback T.R."/>
            <person name="Weidman J.F."/>
            <person name="Khouri H.M."/>
            <person name="Gill J."/>
            <person name="Mikula A."/>
            <person name="Bishai W."/>
            <person name="Jacobs W.R. Jr."/>
            <person name="Venter J.C."/>
            <person name="Fraser C.M."/>
        </authorList>
    </citation>
    <scope>NUCLEOTIDE SEQUENCE [LARGE SCALE GENOMIC DNA]</scope>
    <source>
        <strain>CDC 1551 / Oshkosh</strain>
    </source>
</reference>
<gene>
    <name type="primary">vapB9</name>
    <name type="ordered locus">MT0987</name>
</gene>
<dbReference type="EMBL" id="AE000516">
    <property type="protein sequence ID" value="AAK45235.1"/>
    <property type="molecule type" value="Genomic_DNA"/>
</dbReference>
<dbReference type="RefSeq" id="WP_003404898.1">
    <property type="nucleotide sequence ID" value="NZ_KK341227.1"/>
</dbReference>
<dbReference type="SMR" id="P9WJ54"/>
<dbReference type="KEGG" id="mtc:MT0987"/>
<dbReference type="PATRIC" id="fig|83331.31.peg.1059"/>
<dbReference type="HOGENOM" id="CLU_2686507_0_0_11"/>
<dbReference type="Proteomes" id="UP000001020">
    <property type="component" value="Chromosome"/>
</dbReference>
<dbReference type="GO" id="GO:0006355">
    <property type="term" value="P:regulation of DNA-templated transcription"/>
    <property type="evidence" value="ECO:0007669"/>
    <property type="project" value="InterPro"/>
</dbReference>
<dbReference type="InterPro" id="IPR010985">
    <property type="entry name" value="Ribbon_hlx_hlx"/>
</dbReference>
<dbReference type="SUPFAM" id="SSF47598">
    <property type="entry name" value="Ribbon-helix-helix"/>
    <property type="match status" value="1"/>
</dbReference>
<protein>
    <recommendedName>
        <fullName>Putative antitoxin VapB9</fullName>
    </recommendedName>
</protein>
<name>VAPB9_MYCTO</name>
<evidence type="ECO:0000250" key="1"/>
<sequence>MKTLYLRNVPDDVVERLERLAELAKTSVSAVAVRELTEASRRADNPALLGDLPDIGIDTTELIGGIDAERAGR</sequence>
<proteinExistence type="inferred from homology"/>
<accession>P9WJ54</accession>
<accession>F2GHW7</accession>
<accession>P0CW30</accession>
<accession>Q8VKA9</accession>
<keyword id="KW-1185">Reference proteome</keyword>
<keyword id="KW-1277">Toxin-antitoxin system</keyword>